<reference key="1">
    <citation type="journal article" date="2007" name="Genome Res.">
        <title>Reductive evolution and niche adaptation inferred from the genome of Mycobacterium ulcerans, the causative agent of Buruli ulcer.</title>
        <authorList>
            <person name="Stinear T.P."/>
            <person name="Seemann T."/>
            <person name="Pidot S."/>
            <person name="Frigui W."/>
            <person name="Reysset G."/>
            <person name="Garnier T."/>
            <person name="Meurice G."/>
            <person name="Simon D."/>
            <person name="Bouchier C."/>
            <person name="Ma L."/>
            <person name="Tichit M."/>
            <person name="Porter J.L."/>
            <person name="Ryan J."/>
            <person name="Johnson P.D.R."/>
            <person name="Davies J.K."/>
            <person name="Jenkin G.A."/>
            <person name="Small P.L.C."/>
            <person name="Jones L.M."/>
            <person name="Tekaia F."/>
            <person name="Laval F."/>
            <person name="Daffe M."/>
            <person name="Parkhill J."/>
            <person name="Cole S.T."/>
        </authorList>
    </citation>
    <scope>NUCLEOTIDE SEQUENCE [LARGE SCALE GENOMIC DNA]</scope>
    <source>
        <strain>Agy99</strain>
    </source>
</reference>
<dbReference type="EMBL" id="CP000325">
    <property type="protein sequence ID" value="ABL03450.1"/>
    <property type="molecule type" value="Genomic_DNA"/>
</dbReference>
<dbReference type="RefSeq" id="WP_011739075.1">
    <property type="nucleotide sequence ID" value="NC_008611.1"/>
</dbReference>
<dbReference type="SMR" id="A0PM81"/>
<dbReference type="KEGG" id="mul:MUL_0810"/>
<dbReference type="eggNOG" id="COG0256">
    <property type="taxonomic scope" value="Bacteria"/>
</dbReference>
<dbReference type="HOGENOM" id="CLU_098841_0_1_11"/>
<dbReference type="Proteomes" id="UP000000765">
    <property type="component" value="Chromosome"/>
</dbReference>
<dbReference type="GO" id="GO:0022625">
    <property type="term" value="C:cytosolic large ribosomal subunit"/>
    <property type="evidence" value="ECO:0007669"/>
    <property type="project" value="TreeGrafter"/>
</dbReference>
<dbReference type="GO" id="GO:0008097">
    <property type="term" value="F:5S rRNA binding"/>
    <property type="evidence" value="ECO:0007669"/>
    <property type="project" value="TreeGrafter"/>
</dbReference>
<dbReference type="GO" id="GO:0003735">
    <property type="term" value="F:structural constituent of ribosome"/>
    <property type="evidence" value="ECO:0007669"/>
    <property type="project" value="InterPro"/>
</dbReference>
<dbReference type="GO" id="GO:0006412">
    <property type="term" value="P:translation"/>
    <property type="evidence" value="ECO:0007669"/>
    <property type="project" value="UniProtKB-UniRule"/>
</dbReference>
<dbReference type="CDD" id="cd00432">
    <property type="entry name" value="Ribosomal_L18_L5e"/>
    <property type="match status" value="1"/>
</dbReference>
<dbReference type="FunFam" id="3.30.420.100:FF:000001">
    <property type="entry name" value="50S ribosomal protein L18"/>
    <property type="match status" value="1"/>
</dbReference>
<dbReference type="Gene3D" id="3.30.420.100">
    <property type="match status" value="1"/>
</dbReference>
<dbReference type="HAMAP" id="MF_01337_B">
    <property type="entry name" value="Ribosomal_uL18_B"/>
    <property type="match status" value="1"/>
</dbReference>
<dbReference type="InterPro" id="IPR004389">
    <property type="entry name" value="Ribosomal_uL18_bac-type"/>
</dbReference>
<dbReference type="InterPro" id="IPR005484">
    <property type="entry name" value="Ribosomal_uL18_bac/euk"/>
</dbReference>
<dbReference type="NCBIfam" id="TIGR00060">
    <property type="entry name" value="L18_bact"/>
    <property type="match status" value="1"/>
</dbReference>
<dbReference type="PANTHER" id="PTHR12899">
    <property type="entry name" value="39S RIBOSOMAL PROTEIN L18, MITOCHONDRIAL"/>
    <property type="match status" value="1"/>
</dbReference>
<dbReference type="PANTHER" id="PTHR12899:SF3">
    <property type="entry name" value="LARGE RIBOSOMAL SUBUNIT PROTEIN UL18M"/>
    <property type="match status" value="1"/>
</dbReference>
<dbReference type="Pfam" id="PF00861">
    <property type="entry name" value="Ribosomal_L18p"/>
    <property type="match status" value="1"/>
</dbReference>
<dbReference type="SUPFAM" id="SSF53137">
    <property type="entry name" value="Translational machinery components"/>
    <property type="match status" value="1"/>
</dbReference>
<sequence length="122" mass="13325">MGQSVSAIRRVSRLRRHARLRKRIAGTQQRPRLVVHRSARHIHVQLVNDANGTTVAAASSIETDVRGLDGDKKARSVRVGQLIAERAKAADIDTVVFDRGGYTYGGRIAALADAARENGLKF</sequence>
<feature type="chain" id="PRO_1000053067" description="Large ribosomal subunit protein uL18">
    <location>
        <begin position="1"/>
        <end position="122"/>
    </location>
</feature>
<organism>
    <name type="scientific">Mycobacterium ulcerans (strain Agy99)</name>
    <dbReference type="NCBI Taxonomy" id="362242"/>
    <lineage>
        <taxon>Bacteria</taxon>
        <taxon>Bacillati</taxon>
        <taxon>Actinomycetota</taxon>
        <taxon>Actinomycetes</taxon>
        <taxon>Mycobacteriales</taxon>
        <taxon>Mycobacteriaceae</taxon>
        <taxon>Mycobacterium</taxon>
        <taxon>Mycobacterium ulcerans group</taxon>
    </lineage>
</organism>
<proteinExistence type="inferred from homology"/>
<comment type="function">
    <text evidence="1">This is one of the proteins that bind and probably mediate the attachment of the 5S RNA into the large ribosomal subunit, where it forms part of the central protuberance.</text>
</comment>
<comment type="subunit">
    <text evidence="1">Part of the 50S ribosomal subunit; part of the 5S rRNA/L5/L18/L25 subcomplex. Contacts the 5S and 23S rRNAs.</text>
</comment>
<comment type="similarity">
    <text evidence="1">Belongs to the universal ribosomal protein uL18 family.</text>
</comment>
<name>RL18_MYCUA</name>
<protein>
    <recommendedName>
        <fullName evidence="1">Large ribosomal subunit protein uL18</fullName>
    </recommendedName>
    <alternativeName>
        <fullName evidence="2">50S ribosomal protein L18</fullName>
    </alternativeName>
</protein>
<keyword id="KW-0687">Ribonucleoprotein</keyword>
<keyword id="KW-0689">Ribosomal protein</keyword>
<keyword id="KW-0694">RNA-binding</keyword>
<keyword id="KW-0699">rRNA-binding</keyword>
<gene>
    <name evidence="1" type="primary">rplR</name>
    <name type="ordered locus">MUL_0810</name>
</gene>
<accession>A0PM81</accession>
<evidence type="ECO:0000255" key="1">
    <source>
        <dbReference type="HAMAP-Rule" id="MF_01337"/>
    </source>
</evidence>
<evidence type="ECO:0000305" key="2"/>